<protein>
    <recommendedName>
        <fullName>Nucleolar protein 16</fullName>
    </recommendedName>
</protein>
<comment type="function">
    <text evidence="1">Involved in the biogenesis of the 60S ribosomal subunit.</text>
</comment>
<comment type="subunit">
    <text evidence="1">Component of the pre-66S ribosomal particle.</text>
</comment>
<comment type="subcellular location">
    <subcellularLocation>
        <location evidence="1">Nucleus</location>
        <location evidence="1">Nucleolus</location>
    </subcellularLocation>
</comment>
<comment type="similarity">
    <text evidence="3">Belongs to the NOP16 family.</text>
</comment>
<sequence length="213" mass="24390">MANPRQRNKAKSSRTQKPSLNAKRRMHQKLRKAPPLKGPEVLQEKWDKKKTVFQNYAALGLLPSIPVSKGASTSRSQRVKLPEVPAEAEAQNVKVGFGRIIRDEEGNVIDIIIDEDEEKQEEEQIEVDEEKELEPVEAKTEVVKRLEELAASAAPVKRHSSMSERTWLQQLVDKYGDDTERMARDRKLNVWQKTEGEIKRMIKKAGGVQMLRK</sequence>
<name>NOP16_CRYNJ</name>
<gene>
    <name type="primary">NOP16</name>
    <name type="ordered locus">CNC00240</name>
</gene>
<proteinExistence type="inferred from homology"/>
<accession>P0CP24</accession>
<accession>Q55UY2</accession>
<accession>Q5KL99</accession>
<feature type="chain" id="PRO_0000320374" description="Nucleolar protein 16">
    <location>
        <begin position="1"/>
        <end position="213"/>
    </location>
</feature>
<feature type="region of interest" description="Disordered" evidence="2">
    <location>
        <begin position="1"/>
        <end position="42"/>
    </location>
</feature>
<feature type="compositionally biased region" description="Basic residues" evidence="2">
    <location>
        <begin position="1"/>
        <end position="14"/>
    </location>
</feature>
<feature type="compositionally biased region" description="Basic residues" evidence="2">
    <location>
        <begin position="22"/>
        <end position="34"/>
    </location>
</feature>
<reference key="1">
    <citation type="journal article" date="2005" name="Science">
        <title>The genome of the basidiomycetous yeast and human pathogen Cryptococcus neoformans.</title>
        <authorList>
            <person name="Loftus B.J."/>
            <person name="Fung E."/>
            <person name="Roncaglia P."/>
            <person name="Rowley D."/>
            <person name="Amedeo P."/>
            <person name="Bruno D."/>
            <person name="Vamathevan J."/>
            <person name="Miranda M."/>
            <person name="Anderson I.J."/>
            <person name="Fraser J.A."/>
            <person name="Allen J.E."/>
            <person name="Bosdet I.E."/>
            <person name="Brent M.R."/>
            <person name="Chiu R."/>
            <person name="Doering T.L."/>
            <person name="Donlin M.J."/>
            <person name="D'Souza C.A."/>
            <person name="Fox D.S."/>
            <person name="Grinberg V."/>
            <person name="Fu J."/>
            <person name="Fukushima M."/>
            <person name="Haas B.J."/>
            <person name="Huang J.C."/>
            <person name="Janbon G."/>
            <person name="Jones S.J.M."/>
            <person name="Koo H.L."/>
            <person name="Krzywinski M.I."/>
            <person name="Kwon-Chung K.J."/>
            <person name="Lengeler K.B."/>
            <person name="Maiti R."/>
            <person name="Marra M.A."/>
            <person name="Marra R.E."/>
            <person name="Mathewson C.A."/>
            <person name="Mitchell T.G."/>
            <person name="Pertea M."/>
            <person name="Riggs F.R."/>
            <person name="Salzberg S.L."/>
            <person name="Schein J.E."/>
            <person name="Shvartsbeyn A."/>
            <person name="Shin H."/>
            <person name="Shumway M."/>
            <person name="Specht C.A."/>
            <person name="Suh B.B."/>
            <person name="Tenney A."/>
            <person name="Utterback T.R."/>
            <person name="Wickes B.L."/>
            <person name="Wortman J.R."/>
            <person name="Wye N.H."/>
            <person name="Kronstad J.W."/>
            <person name="Lodge J.K."/>
            <person name="Heitman J."/>
            <person name="Davis R.W."/>
            <person name="Fraser C.M."/>
            <person name="Hyman R.W."/>
        </authorList>
    </citation>
    <scope>NUCLEOTIDE SEQUENCE [LARGE SCALE GENOMIC DNA]</scope>
    <source>
        <strain>JEC21 / ATCC MYA-565</strain>
    </source>
</reference>
<dbReference type="EMBL" id="AE017343">
    <property type="protein sequence ID" value="AAW42089.1"/>
    <property type="molecule type" value="Genomic_DNA"/>
</dbReference>
<dbReference type="RefSeq" id="XP_569396.1">
    <property type="nucleotide sequence ID" value="XM_569396.1"/>
</dbReference>
<dbReference type="SMR" id="P0CP24"/>
<dbReference type="FunCoup" id="P0CP24">
    <property type="interactions" value="116"/>
</dbReference>
<dbReference type="STRING" id="214684.P0CP24"/>
<dbReference type="PaxDb" id="214684-P0CP24"/>
<dbReference type="EnsemblFungi" id="AAW42089">
    <property type="protein sequence ID" value="AAW42089"/>
    <property type="gene ID" value="CNC00240"/>
</dbReference>
<dbReference type="GeneID" id="3256640"/>
<dbReference type="KEGG" id="cne:CNC00240"/>
<dbReference type="VEuPathDB" id="FungiDB:CNC00240"/>
<dbReference type="eggNOG" id="KOG4771">
    <property type="taxonomic scope" value="Eukaryota"/>
</dbReference>
<dbReference type="HOGENOM" id="CLU_078857_0_0_1"/>
<dbReference type="InParanoid" id="P0CP24"/>
<dbReference type="OMA" id="MQQTEAD"/>
<dbReference type="OrthoDB" id="285729at2759"/>
<dbReference type="Proteomes" id="UP000002149">
    <property type="component" value="Chromosome 3"/>
</dbReference>
<dbReference type="GO" id="GO:0005730">
    <property type="term" value="C:nucleolus"/>
    <property type="evidence" value="ECO:0000318"/>
    <property type="project" value="GO_Central"/>
</dbReference>
<dbReference type="GO" id="GO:1990904">
    <property type="term" value="C:ribonucleoprotein complex"/>
    <property type="evidence" value="ECO:0007669"/>
    <property type="project" value="UniProtKB-KW"/>
</dbReference>
<dbReference type="GO" id="GO:0042273">
    <property type="term" value="P:ribosomal large subunit biogenesis"/>
    <property type="evidence" value="ECO:0000318"/>
    <property type="project" value="GO_Central"/>
</dbReference>
<dbReference type="GO" id="GO:0006364">
    <property type="term" value="P:rRNA processing"/>
    <property type="evidence" value="ECO:0007669"/>
    <property type="project" value="UniProtKB-KW"/>
</dbReference>
<dbReference type="InterPro" id="IPR019002">
    <property type="entry name" value="Ribosome_biogenesis_Nop16"/>
</dbReference>
<dbReference type="PANTHER" id="PTHR13243">
    <property type="entry name" value="HSPC111 PROTEIN-RELATED"/>
    <property type="match status" value="1"/>
</dbReference>
<dbReference type="PANTHER" id="PTHR13243:SF1">
    <property type="entry name" value="NUCLEOLAR PROTEIN 16"/>
    <property type="match status" value="1"/>
</dbReference>
<dbReference type="Pfam" id="PF09420">
    <property type="entry name" value="Nop16"/>
    <property type="match status" value="1"/>
</dbReference>
<evidence type="ECO:0000250" key="1"/>
<evidence type="ECO:0000256" key="2">
    <source>
        <dbReference type="SAM" id="MobiDB-lite"/>
    </source>
</evidence>
<evidence type="ECO:0000305" key="3"/>
<keyword id="KW-0539">Nucleus</keyword>
<keyword id="KW-1185">Reference proteome</keyword>
<keyword id="KW-0687">Ribonucleoprotein</keyword>
<keyword id="KW-0690">Ribosome biogenesis</keyword>
<keyword id="KW-0698">rRNA processing</keyword>
<organism>
    <name type="scientific">Cryptococcus neoformans var. neoformans serotype D (strain JEC21 / ATCC MYA-565)</name>
    <name type="common">Filobasidiella neoformans</name>
    <dbReference type="NCBI Taxonomy" id="214684"/>
    <lineage>
        <taxon>Eukaryota</taxon>
        <taxon>Fungi</taxon>
        <taxon>Dikarya</taxon>
        <taxon>Basidiomycota</taxon>
        <taxon>Agaricomycotina</taxon>
        <taxon>Tremellomycetes</taxon>
        <taxon>Tremellales</taxon>
        <taxon>Cryptococcaceae</taxon>
        <taxon>Cryptococcus</taxon>
        <taxon>Cryptococcus neoformans species complex</taxon>
    </lineage>
</organism>